<protein>
    <recommendedName>
        <fullName>DNA terminal protein</fullName>
    </recommendedName>
    <alternativeName>
        <fullName>Gene product 3</fullName>
        <shortName>gp3</shortName>
    </alternativeName>
    <alternativeName>
        <fullName>Protein p3</fullName>
    </alternativeName>
</protein>
<proteinExistence type="inferred from homology"/>
<dbReference type="EMBL" id="X99260">
    <property type="protein sequence ID" value="CAA67650.1"/>
    <property type="molecule type" value="Genomic_DNA"/>
</dbReference>
<dbReference type="RefSeq" id="NP_690636.1">
    <property type="nucleotide sequence ID" value="NC_004165.1"/>
</dbReference>
<dbReference type="SMR" id="Q37883"/>
<dbReference type="KEGG" id="vg:955358"/>
<dbReference type="Proteomes" id="UP000000971">
    <property type="component" value="Segment"/>
</dbReference>
<dbReference type="GO" id="GO:0044423">
    <property type="term" value="C:virion component"/>
    <property type="evidence" value="ECO:0007669"/>
    <property type="project" value="UniProtKB-KW"/>
</dbReference>
<dbReference type="GO" id="GO:0016787">
    <property type="term" value="F:hydrolase activity"/>
    <property type="evidence" value="ECO:0007669"/>
    <property type="project" value="UniProtKB-KW"/>
</dbReference>
<dbReference type="GO" id="GO:0006269">
    <property type="term" value="P:DNA replication, synthesis of primer"/>
    <property type="evidence" value="ECO:0007669"/>
    <property type="project" value="InterPro"/>
</dbReference>
<dbReference type="GO" id="GO:0098994">
    <property type="term" value="P:symbiont entry into host cell via disruption of host cell envelope"/>
    <property type="evidence" value="ECO:0007669"/>
    <property type="project" value="UniProtKB-KW"/>
</dbReference>
<dbReference type="GO" id="GO:0098932">
    <property type="term" value="P:symbiont entry into host cell via disruption of host cell wall peptidoglycan"/>
    <property type="evidence" value="ECO:0007669"/>
    <property type="project" value="UniProtKB-KW"/>
</dbReference>
<dbReference type="GO" id="GO:0039693">
    <property type="term" value="P:viral DNA genome replication"/>
    <property type="evidence" value="ECO:0007669"/>
    <property type="project" value="UniProtKB-KW"/>
</dbReference>
<dbReference type="Gene3D" id="6.10.250.960">
    <property type="match status" value="1"/>
</dbReference>
<dbReference type="Gene3D" id="1.20.1270.230">
    <property type="entry name" value="DNA terminal protein Gp3, priming domain"/>
    <property type="match status" value="1"/>
</dbReference>
<dbReference type="InterPro" id="IPR008770">
    <property type="entry name" value="DNA_terminal_Gp3"/>
</dbReference>
<dbReference type="InterPro" id="IPR043124">
    <property type="entry name" value="DNA_terminal_Gp3_C"/>
</dbReference>
<dbReference type="InterPro" id="IPR037216">
    <property type="entry name" value="DNA_terminal_Gp3_sf"/>
</dbReference>
<dbReference type="Pfam" id="PF05435">
    <property type="entry name" value="Phi-29_GP3"/>
    <property type="match status" value="1"/>
</dbReference>
<dbReference type="PIRSF" id="PIRSF004179">
    <property type="entry name" value="Phi-29_GP3"/>
    <property type="match status" value="1"/>
</dbReference>
<dbReference type="SUPFAM" id="SSF140919">
    <property type="entry name" value="DNA terminal protein"/>
    <property type="match status" value="1"/>
</dbReference>
<organismHost>
    <name type="scientific">Bacillus subtilis</name>
    <dbReference type="NCBI Taxonomy" id="1423"/>
</organismHost>
<accession>Q37883</accession>
<comment type="function">
    <text evidence="1">Acts as a primer for DNA elongation during viral genomic replication. Acts as the small terminase protein during packaging. Recruits the phage DNA polymerase to the bacterial nucleoid. Primer terminal protein (TP) is covalently linked to the 5'-ends of both strands of the genome through a phosphodiester bond between the beta-hydroxyl group of a serine residue and the 5'-phosphate of the terminal deoxyadenylate (dAMP). To start replication, the DNA polymerase forms a heterodimer with a free TP that recognizes the replication origins at both 5' ends of the linear chromosome, and initiates replication using as primer the OH-group of Ser-232 of the TP. Since the polymerase initiates the replication on the second thymine, the TP-dAMP initiation product slides backwards to recover the template information of the first nucleotide.</text>
</comment>
<comment type="function">
    <text evidence="1">Hydrolyzes host peptidoglycans during virus entry.</text>
</comment>
<comment type="subunit">
    <text evidence="1">Interacts with the viral polymerase; this interaction allows the initiation of TP-primed DNA replication at both viral DNA ends. Binds to ssDNA. Interacts with the replication protein p1. Part of a DNA-gp3-gp16 complex.</text>
</comment>
<comment type="subcellular location">
    <subcellularLocation>
        <location evidence="1">Virion</location>
    </subcellularLocation>
    <text evidence="1">Associates with the host bacterial nucleoid through its N-terminal region.</text>
</comment>
<comment type="similarity">
    <text evidence="2">Belongs to the phi29likevirus DNA terminal protein family.</text>
</comment>
<organism>
    <name type="scientific">Bacillus phage B103</name>
    <name type="common">Bacteriophage B103</name>
    <dbReference type="NCBI Taxonomy" id="2994042"/>
    <lineage>
        <taxon>Viruses</taxon>
        <taxon>Duplodnaviria</taxon>
        <taxon>Heunggongvirae</taxon>
        <taxon>Uroviricota</taxon>
        <taxon>Caudoviricetes</taxon>
        <taxon>Salasmaviridae</taxon>
        <taxon>Picovirinae</taxon>
        <taxon>Beecentumtrevirus</taxon>
        <taxon>Beecentumtrevirus B103</taxon>
    </lineage>
</organism>
<name>TERM_BPB03</name>
<keyword id="KW-0190">Covalent protein-DNA linkage</keyword>
<keyword id="KW-1235">Degradation of host cell envelope components during virus entry</keyword>
<keyword id="KW-1236">Degradation of host peptidoglycans during virus entry</keyword>
<keyword id="KW-0235">DNA replication</keyword>
<keyword id="KW-0244">Early protein</keyword>
<keyword id="KW-0378">Hydrolase</keyword>
<keyword id="KW-0597">Phosphoprotein</keyword>
<keyword id="KW-1194">Viral DNA replication</keyword>
<keyword id="KW-0946">Virion</keyword>
<keyword id="KW-1160">Virus entry into host cell</keyword>
<reference key="1">
    <citation type="journal article" date="1997" name="Gene">
        <title>Bacteriophage B103: complete DNA sequence of its genome and relationship to other Bacillus phages.</title>
        <authorList>
            <person name="Pecenkova T."/>
            <person name="Benes V."/>
            <person name="Paces J."/>
            <person name="Vlcek C."/>
            <person name="Paces V."/>
        </authorList>
    </citation>
    <scope>NUCLEOTIDE SEQUENCE [LARGE SCALE GENOMIC DNA]</scope>
</reference>
<gene>
    <name type="primary">3</name>
</gene>
<feature type="chain" id="PRO_0000106552" description="DNA terminal protein">
    <location>
        <begin position="1"/>
        <end position="266"/>
    </location>
</feature>
<feature type="region of interest" description="Disordered" evidence="1">
    <location>
        <begin position="1"/>
        <end position="73"/>
    </location>
</feature>
<feature type="region of interest" description="Intermediate; makes extensive contacts with the phage DNA polymerase" evidence="1">
    <location>
        <begin position="74"/>
        <end position="172"/>
    </location>
</feature>
<feature type="region of interest" description="Priming" evidence="1">
    <location>
        <begin position="173"/>
        <end position="266"/>
    </location>
</feature>
<feature type="region of interest" description="Interaction with the viral DNA polymerase" evidence="1">
    <location>
        <begin position="256"/>
        <end position="258"/>
    </location>
</feature>
<feature type="site" description="Positions the 3' end of the template strand at the active site of the DNA polymerase" evidence="1">
    <location>
        <position position="230"/>
    </location>
</feature>
<feature type="modified residue" description="O-(5'-phospho-DNA)-serine" evidence="1">
    <location>
        <position position="232"/>
    </location>
</feature>
<evidence type="ECO:0000250" key="1">
    <source>
        <dbReference type="UniProtKB" id="P03681"/>
    </source>
</evidence>
<evidence type="ECO:0000305" key="2"/>
<sequence length="266" mass="31297">MARNSRIRITNNDKALYAKLVKNTKAKISRTKKKYGIDLSNEIELPPLESFQTRKEFNEWKRKQESFTNRANQNYQFVKNKYGIVASKAKINEIEKNTKEAQRIVDEQREEIEDKPFISGGKQQGTVGQRMQILSPSQVTGVSRPSDFNFDDVRSYARLRTLEEGMAEKASPDYYDRRMAQMHQNFIEIVEKSFNSYWLTDELVERLKKIPPDDFFELYLIFDEISFEYFDSEGEDVEASEAMLNKIHSYLDRYERGDVNLDLKGF</sequence>